<keyword id="KW-0249">Electron transport</keyword>
<keyword id="KW-0349">Heme</keyword>
<keyword id="KW-0408">Iron</keyword>
<keyword id="KW-0472">Membrane</keyword>
<keyword id="KW-0479">Metal-binding</keyword>
<keyword id="KW-0496">Mitochondrion</keyword>
<keyword id="KW-0999">Mitochondrion inner membrane</keyword>
<keyword id="KW-0679">Respiratory chain</keyword>
<keyword id="KW-0812">Transmembrane</keyword>
<keyword id="KW-1133">Transmembrane helix</keyword>
<keyword id="KW-0813">Transport</keyword>
<keyword id="KW-0830">Ubiquinone</keyword>
<reference key="1">
    <citation type="journal article" date="1999" name="Mol. Phylogenet. Evol.">
        <title>The tribal radiation of the family Bovidae (Artiodactyla) and the evolution of the mitochondrial cytochrome b gene.</title>
        <authorList>
            <person name="Hassanin A."/>
            <person name="Douzery E.J.P."/>
        </authorList>
    </citation>
    <scope>NUCLEOTIDE SEQUENCE [GENOMIC DNA]</scope>
</reference>
<reference key="2">
    <citation type="journal article" date="1999" name="Mol. Phylogenet. Evol.">
        <title>Cytochrome b phylogeny of the family bovidae: resolution within the alcelaphini, antilopini, neotragini, and tragelaphini.</title>
        <authorList>
            <person name="Matthee C.A."/>
            <person name="Robinson T.J."/>
        </authorList>
    </citation>
    <scope>NUCLEOTIDE SEQUENCE [GENOMIC DNA]</scope>
</reference>
<name>CYB_OREOR</name>
<evidence type="ECO:0000250" key="1"/>
<evidence type="ECO:0000250" key="2">
    <source>
        <dbReference type="UniProtKB" id="P00157"/>
    </source>
</evidence>
<evidence type="ECO:0000255" key="3">
    <source>
        <dbReference type="PROSITE-ProRule" id="PRU00967"/>
    </source>
</evidence>
<evidence type="ECO:0000255" key="4">
    <source>
        <dbReference type="PROSITE-ProRule" id="PRU00968"/>
    </source>
</evidence>
<evidence type="ECO:0000305" key="5"/>
<geneLocation type="mitochondrion"/>
<accession>Q9T9A6</accession>
<accession>O99340</accession>
<feature type="chain" id="PRO_0000061323" description="Cytochrome b">
    <location>
        <begin position="1"/>
        <end position="379"/>
    </location>
</feature>
<feature type="transmembrane region" description="Helical" evidence="2">
    <location>
        <begin position="33"/>
        <end position="53"/>
    </location>
</feature>
<feature type="transmembrane region" description="Helical" evidence="2">
    <location>
        <begin position="77"/>
        <end position="98"/>
    </location>
</feature>
<feature type="transmembrane region" description="Helical" evidence="2">
    <location>
        <begin position="113"/>
        <end position="133"/>
    </location>
</feature>
<feature type="transmembrane region" description="Helical" evidence="2">
    <location>
        <begin position="178"/>
        <end position="198"/>
    </location>
</feature>
<feature type="transmembrane region" description="Helical" evidence="2">
    <location>
        <begin position="226"/>
        <end position="246"/>
    </location>
</feature>
<feature type="transmembrane region" description="Helical" evidence="2">
    <location>
        <begin position="288"/>
        <end position="308"/>
    </location>
</feature>
<feature type="transmembrane region" description="Helical" evidence="2">
    <location>
        <begin position="320"/>
        <end position="340"/>
    </location>
</feature>
<feature type="transmembrane region" description="Helical" evidence="2">
    <location>
        <begin position="347"/>
        <end position="367"/>
    </location>
</feature>
<feature type="binding site" description="axial binding residue" evidence="2">
    <location>
        <position position="83"/>
    </location>
    <ligand>
        <name>heme b</name>
        <dbReference type="ChEBI" id="CHEBI:60344"/>
        <label>b562</label>
    </ligand>
    <ligandPart>
        <name>Fe</name>
        <dbReference type="ChEBI" id="CHEBI:18248"/>
    </ligandPart>
</feature>
<feature type="binding site" description="axial binding residue" evidence="2">
    <location>
        <position position="97"/>
    </location>
    <ligand>
        <name>heme b</name>
        <dbReference type="ChEBI" id="CHEBI:60344"/>
        <label>b566</label>
    </ligand>
    <ligandPart>
        <name>Fe</name>
        <dbReference type="ChEBI" id="CHEBI:18248"/>
    </ligandPart>
</feature>
<feature type="binding site" description="axial binding residue" evidence="2">
    <location>
        <position position="182"/>
    </location>
    <ligand>
        <name>heme b</name>
        <dbReference type="ChEBI" id="CHEBI:60344"/>
        <label>b562</label>
    </ligand>
    <ligandPart>
        <name>Fe</name>
        <dbReference type="ChEBI" id="CHEBI:18248"/>
    </ligandPart>
</feature>
<feature type="binding site" description="axial binding residue" evidence="2">
    <location>
        <position position="196"/>
    </location>
    <ligand>
        <name>heme b</name>
        <dbReference type="ChEBI" id="CHEBI:60344"/>
        <label>b566</label>
    </ligand>
    <ligandPart>
        <name>Fe</name>
        <dbReference type="ChEBI" id="CHEBI:18248"/>
    </ligandPart>
</feature>
<feature type="binding site" evidence="2">
    <location>
        <position position="201"/>
    </location>
    <ligand>
        <name>a ubiquinone</name>
        <dbReference type="ChEBI" id="CHEBI:16389"/>
    </ligand>
</feature>
<feature type="sequence conflict" description="In Ref. 2; AAD13486." evidence="5" ref="2">
    <original>A</original>
    <variation>T</variation>
    <location>
        <position position="190"/>
    </location>
</feature>
<feature type="sequence conflict" description="In Ref. 2; AAD13486." evidence="5" ref="2">
    <original>V</original>
    <variation>I</variation>
    <location>
        <position position="295"/>
    </location>
</feature>
<feature type="sequence conflict" description="In Ref. 2; AAD13486." evidence="5" ref="2">
    <original>T</original>
    <variation>M</variation>
    <location>
        <position position="304"/>
    </location>
</feature>
<gene>
    <name type="primary">MT-CYB</name>
    <name type="synonym">COB</name>
    <name type="synonym">CYTB</name>
    <name type="synonym">MTCYB</name>
</gene>
<sequence length="379" mass="42775">MTNIRKTHPLMKIVNNAFIDLPAPSNISSWWNFGSLLGICLILQILTGLFLAMHYTADTTTAFSSVTHICRDVNYGWIIRYMHANGASMFFICLFMHVGRGLYYGSYTFIETWNIGVILLFATMATAFMGYVLPWGQMSFWGATVITNLLSAIPYIGTNLVEWIWGGFSVDKATLTRFFAFHFIFPFIIAALAMVHLLFLHETGSNNPTGISSDTDKIPFHPYYTIKDILGALLLILALLLLVLFTPDLLGDPDNYTPANPLNTPPHIKPEWYFLFAYAILRSIPNKLGGVLALVLSILILILTPMLHTSKQRSMMFRPFSQCLFWILVADLLTLTWIGGQPVEHPYIIIGQLASIMYFLLILVLMPMASTIENNLLKW</sequence>
<comment type="function">
    <text evidence="2">Component of the ubiquinol-cytochrome c reductase complex (complex III or cytochrome b-c1 complex) that is part of the mitochondrial respiratory chain. The b-c1 complex mediates electron transfer from ubiquinol to cytochrome c. Contributes to the generation of a proton gradient across the mitochondrial membrane that is then used for ATP synthesis.</text>
</comment>
<comment type="cofactor">
    <cofactor evidence="2">
        <name>heme b</name>
        <dbReference type="ChEBI" id="CHEBI:60344"/>
    </cofactor>
    <text evidence="2">Binds 2 heme b groups non-covalently.</text>
</comment>
<comment type="subunit">
    <text evidence="2">The cytochrome bc1 complex contains 11 subunits: 3 respiratory subunits (MT-CYB, CYC1 and UQCRFS1), 2 core proteins (UQCRC1 and UQCRC2) and 6 low-molecular weight proteins (UQCRH/QCR6, UQCRB/QCR7, UQCRQ/QCR8, UQCR10/QCR9, UQCR11/QCR10 and a cleavage product of UQCRFS1). This cytochrome bc1 complex then forms a dimer.</text>
</comment>
<comment type="subcellular location">
    <subcellularLocation>
        <location evidence="2">Mitochondrion inner membrane</location>
        <topology evidence="2">Multi-pass membrane protein</topology>
    </subcellularLocation>
</comment>
<comment type="miscellaneous">
    <text evidence="1">Heme 1 (or BL or b562) is low-potential and absorbs at about 562 nm, and heme 2 (or BH or b566) is high-potential and absorbs at about 566 nm.</text>
</comment>
<comment type="similarity">
    <text evidence="3 4">Belongs to the cytochrome b family.</text>
</comment>
<comment type="caution">
    <text evidence="2">The full-length protein contains only eight transmembrane helices, not nine as predicted by bioinformatics tools.</text>
</comment>
<proteinExistence type="inferred from homology"/>
<protein>
    <recommendedName>
        <fullName>Cytochrome b</fullName>
    </recommendedName>
    <alternativeName>
        <fullName>Complex III subunit 3</fullName>
    </alternativeName>
    <alternativeName>
        <fullName>Complex III subunit III</fullName>
    </alternativeName>
    <alternativeName>
        <fullName>Cytochrome b-c1 complex subunit 3</fullName>
    </alternativeName>
    <alternativeName>
        <fullName>Ubiquinol-cytochrome-c reductase complex cytochrome b subunit</fullName>
    </alternativeName>
</protein>
<organism>
    <name type="scientific">Oreotragus oreotragus</name>
    <name type="common">Klipspringer</name>
    <dbReference type="NCBI Taxonomy" id="66444"/>
    <lineage>
        <taxon>Eukaryota</taxon>
        <taxon>Metazoa</taxon>
        <taxon>Chordata</taxon>
        <taxon>Craniata</taxon>
        <taxon>Vertebrata</taxon>
        <taxon>Euteleostomi</taxon>
        <taxon>Mammalia</taxon>
        <taxon>Eutheria</taxon>
        <taxon>Laurasiatheria</taxon>
        <taxon>Artiodactyla</taxon>
        <taxon>Ruminantia</taxon>
        <taxon>Pecora</taxon>
        <taxon>Bovidae</taxon>
        <taxon>Antilopinae</taxon>
        <taxon>Oreotragus</taxon>
    </lineage>
</organism>
<dbReference type="EMBL" id="AF036288">
    <property type="protein sequence ID" value="AAD51439.1"/>
    <property type="molecule type" value="Genomic_DNA"/>
</dbReference>
<dbReference type="EMBL" id="AF022052">
    <property type="protein sequence ID" value="AAD13486.1"/>
    <property type="molecule type" value="Genomic_DNA"/>
</dbReference>
<dbReference type="RefSeq" id="YP_007626471.1">
    <property type="nucleotide sequence ID" value="NC_020731.1"/>
</dbReference>
<dbReference type="SMR" id="Q9T9A6"/>
<dbReference type="GeneID" id="14842349"/>
<dbReference type="CTD" id="4519"/>
<dbReference type="GO" id="GO:0005743">
    <property type="term" value="C:mitochondrial inner membrane"/>
    <property type="evidence" value="ECO:0007669"/>
    <property type="project" value="UniProtKB-SubCell"/>
</dbReference>
<dbReference type="GO" id="GO:0045275">
    <property type="term" value="C:respiratory chain complex III"/>
    <property type="evidence" value="ECO:0007669"/>
    <property type="project" value="InterPro"/>
</dbReference>
<dbReference type="GO" id="GO:0046872">
    <property type="term" value="F:metal ion binding"/>
    <property type="evidence" value="ECO:0007669"/>
    <property type="project" value="UniProtKB-KW"/>
</dbReference>
<dbReference type="GO" id="GO:0008121">
    <property type="term" value="F:ubiquinol-cytochrome-c reductase activity"/>
    <property type="evidence" value="ECO:0007669"/>
    <property type="project" value="InterPro"/>
</dbReference>
<dbReference type="GO" id="GO:0006122">
    <property type="term" value="P:mitochondrial electron transport, ubiquinol to cytochrome c"/>
    <property type="evidence" value="ECO:0007669"/>
    <property type="project" value="TreeGrafter"/>
</dbReference>
<dbReference type="CDD" id="cd00290">
    <property type="entry name" value="cytochrome_b_C"/>
    <property type="match status" value="1"/>
</dbReference>
<dbReference type="CDD" id="cd00284">
    <property type="entry name" value="Cytochrome_b_N"/>
    <property type="match status" value="1"/>
</dbReference>
<dbReference type="FunFam" id="1.20.810.10:FF:000002">
    <property type="entry name" value="Cytochrome b"/>
    <property type="match status" value="1"/>
</dbReference>
<dbReference type="Gene3D" id="1.20.810.10">
    <property type="entry name" value="Cytochrome Bc1 Complex, Chain C"/>
    <property type="match status" value="1"/>
</dbReference>
<dbReference type="InterPro" id="IPR005798">
    <property type="entry name" value="Cyt_b/b6_C"/>
</dbReference>
<dbReference type="InterPro" id="IPR036150">
    <property type="entry name" value="Cyt_b/b6_C_sf"/>
</dbReference>
<dbReference type="InterPro" id="IPR005797">
    <property type="entry name" value="Cyt_b/b6_N"/>
</dbReference>
<dbReference type="InterPro" id="IPR027387">
    <property type="entry name" value="Cytb/b6-like_sf"/>
</dbReference>
<dbReference type="InterPro" id="IPR030689">
    <property type="entry name" value="Cytochrome_b"/>
</dbReference>
<dbReference type="InterPro" id="IPR048260">
    <property type="entry name" value="Cytochrome_b_C_euk/bac"/>
</dbReference>
<dbReference type="InterPro" id="IPR048259">
    <property type="entry name" value="Cytochrome_b_N_euk/bac"/>
</dbReference>
<dbReference type="InterPro" id="IPR016174">
    <property type="entry name" value="Di-haem_cyt_TM"/>
</dbReference>
<dbReference type="PANTHER" id="PTHR19271">
    <property type="entry name" value="CYTOCHROME B"/>
    <property type="match status" value="1"/>
</dbReference>
<dbReference type="PANTHER" id="PTHR19271:SF16">
    <property type="entry name" value="CYTOCHROME B"/>
    <property type="match status" value="1"/>
</dbReference>
<dbReference type="Pfam" id="PF00032">
    <property type="entry name" value="Cytochrom_B_C"/>
    <property type="match status" value="1"/>
</dbReference>
<dbReference type="Pfam" id="PF00033">
    <property type="entry name" value="Cytochrome_B"/>
    <property type="match status" value="1"/>
</dbReference>
<dbReference type="PIRSF" id="PIRSF038885">
    <property type="entry name" value="COB"/>
    <property type="match status" value="1"/>
</dbReference>
<dbReference type="SUPFAM" id="SSF81648">
    <property type="entry name" value="a domain/subunit of cytochrome bc1 complex (Ubiquinol-cytochrome c reductase)"/>
    <property type="match status" value="1"/>
</dbReference>
<dbReference type="SUPFAM" id="SSF81342">
    <property type="entry name" value="Transmembrane di-heme cytochromes"/>
    <property type="match status" value="1"/>
</dbReference>
<dbReference type="PROSITE" id="PS51003">
    <property type="entry name" value="CYTB_CTER"/>
    <property type="match status" value="1"/>
</dbReference>
<dbReference type="PROSITE" id="PS51002">
    <property type="entry name" value="CYTB_NTER"/>
    <property type="match status" value="1"/>
</dbReference>